<name>TTCA_SALPC</name>
<organism>
    <name type="scientific">Salmonella paratyphi C (strain RKS4594)</name>
    <dbReference type="NCBI Taxonomy" id="476213"/>
    <lineage>
        <taxon>Bacteria</taxon>
        <taxon>Pseudomonadati</taxon>
        <taxon>Pseudomonadota</taxon>
        <taxon>Gammaproteobacteria</taxon>
        <taxon>Enterobacterales</taxon>
        <taxon>Enterobacteriaceae</taxon>
        <taxon>Salmonella</taxon>
    </lineage>
</organism>
<keyword id="KW-0004">4Fe-4S</keyword>
<keyword id="KW-0067">ATP-binding</keyword>
<keyword id="KW-0963">Cytoplasm</keyword>
<keyword id="KW-0408">Iron</keyword>
<keyword id="KW-0411">Iron-sulfur</keyword>
<keyword id="KW-0460">Magnesium</keyword>
<keyword id="KW-0479">Metal-binding</keyword>
<keyword id="KW-0547">Nucleotide-binding</keyword>
<keyword id="KW-0694">RNA-binding</keyword>
<keyword id="KW-0808">Transferase</keyword>
<keyword id="KW-0819">tRNA processing</keyword>
<keyword id="KW-0820">tRNA-binding</keyword>
<reference key="1">
    <citation type="journal article" date="2009" name="PLoS ONE">
        <title>Salmonella paratyphi C: genetic divergence from Salmonella choleraesuis and pathogenic convergence with Salmonella typhi.</title>
        <authorList>
            <person name="Liu W.-Q."/>
            <person name="Feng Y."/>
            <person name="Wang Y."/>
            <person name="Zou Q.-H."/>
            <person name="Chen F."/>
            <person name="Guo J.-T."/>
            <person name="Peng Y.-H."/>
            <person name="Jin Y."/>
            <person name="Li Y.-G."/>
            <person name="Hu S.-N."/>
            <person name="Johnston R.N."/>
            <person name="Liu G.-R."/>
            <person name="Liu S.-L."/>
        </authorList>
    </citation>
    <scope>NUCLEOTIDE SEQUENCE [LARGE SCALE GENOMIC DNA]</scope>
    <source>
        <strain>RKS4594</strain>
    </source>
</reference>
<sequence length="311" mass="35329">MQEIQKNTKKEQYNLNKLQKRLRRNVGEAIADFNMIEEGDRIMVCLSGGKDSYTMLEILRNLQQSAPINFSLVAVNLDQKQPGFPEHILPAYLEPLGVEYKIVEENTYGIVKEKIPEGKTTCSLCSRLRRGILYRTATELGATKIALGHHRDDILQTLFLNMFYGGKMKGMPPKLMSDDGKHIVIRPLAYCREKDIVRFAEAKAFPIIPCNLCGSQPNLQRQVIADMLRDWDKRYPGRIETMFSAMQNVVPSHLCDTNLFDFKGITHGSEVVDGGDLAFDREEIPLQPAGWQPEEDDTSLEALRLDVIEVK</sequence>
<evidence type="ECO:0000255" key="1">
    <source>
        <dbReference type="HAMAP-Rule" id="MF_01850"/>
    </source>
</evidence>
<feature type="chain" id="PRO_1000188659" description="tRNA-cytidine(32) 2-sulfurtransferase">
    <location>
        <begin position="1"/>
        <end position="311"/>
    </location>
</feature>
<feature type="short sequence motif" description="PP-loop motif" evidence="1">
    <location>
        <begin position="47"/>
        <end position="52"/>
    </location>
</feature>
<feature type="binding site" evidence="1">
    <location>
        <position position="122"/>
    </location>
    <ligand>
        <name>[4Fe-4S] cluster</name>
        <dbReference type="ChEBI" id="CHEBI:49883"/>
    </ligand>
</feature>
<feature type="binding site" evidence="1">
    <location>
        <position position="125"/>
    </location>
    <ligand>
        <name>[4Fe-4S] cluster</name>
        <dbReference type="ChEBI" id="CHEBI:49883"/>
    </ligand>
</feature>
<feature type="binding site" evidence="1">
    <location>
        <position position="213"/>
    </location>
    <ligand>
        <name>[4Fe-4S] cluster</name>
        <dbReference type="ChEBI" id="CHEBI:49883"/>
    </ligand>
</feature>
<dbReference type="EC" id="2.8.1.-" evidence="1"/>
<dbReference type="EMBL" id="CP000857">
    <property type="protein sequence ID" value="ACN46211.1"/>
    <property type="molecule type" value="Genomic_DNA"/>
</dbReference>
<dbReference type="RefSeq" id="WP_001156206.1">
    <property type="nucleotide sequence ID" value="NC_012125.1"/>
</dbReference>
<dbReference type="SMR" id="C0Q3V6"/>
<dbReference type="KEGG" id="sei:SPC_2080"/>
<dbReference type="HOGENOM" id="CLU_026481_0_0_6"/>
<dbReference type="Proteomes" id="UP000001599">
    <property type="component" value="Chromosome"/>
</dbReference>
<dbReference type="GO" id="GO:0005737">
    <property type="term" value="C:cytoplasm"/>
    <property type="evidence" value="ECO:0007669"/>
    <property type="project" value="UniProtKB-SubCell"/>
</dbReference>
<dbReference type="GO" id="GO:0051539">
    <property type="term" value="F:4 iron, 4 sulfur cluster binding"/>
    <property type="evidence" value="ECO:0007669"/>
    <property type="project" value="UniProtKB-UniRule"/>
</dbReference>
<dbReference type="GO" id="GO:0005524">
    <property type="term" value="F:ATP binding"/>
    <property type="evidence" value="ECO:0007669"/>
    <property type="project" value="UniProtKB-UniRule"/>
</dbReference>
<dbReference type="GO" id="GO:0000287">
    <property type="term" value="F:magnesium ion binding"/>
    <property type="evidence" value="ECO:0007669"/>
    <property type="project" value="UniProtKB-UniRule"/>
</dbReference>
<dbReference type="GO" id="GO:0016783">
    <property type="term" value="F:sulfurtransferase activity"/>
    <property type="evidence" value="ECO:0007669"/>
    <property type="project" value="UniProtKB-UniRule"/>
</dbReference>
<dbReference type="GO" id="GO:0000049">
    <property type="term" value="F:tRNA binding"/>
    <property type="evidence" value="ECO:0007669"/>
    <property type="project" value="UniProtKB-KW"/>
</dbReference>
<dbReference type="GO" id="GO:0034227">
    <property type="term" value="P:tRNA thio-modification"/>
    <property type="evidence" value="ECO:0007669"/>
    <property type="project" value="UniProtKB-UniRule"/>
</dbReference>
<dbReference type="CDD" id="cd24138">
    <property type="entry name" value="TtcA-like"/>
    <property type="match status" value="1"/>
</dbReference>
<dbReference type="FunFam" id="3.40.50.620:FF:000046">
    <property type="entry name" value="tRNA-cytidine(32) 2-sulfurtransferase"/>
    <property type="match status" value="1"/>
</dbReference>
<dbReference type="Gene3D" id="3.40.50.620">
    <property type="entry name" value="HUPs"/>
    <property type="match status" value="1"/>
</dbReference>
<dbReference type="HAMAP" id="MF_01850">
    <property type="entry name" value="TtcA"/>
    <property type="match status" value="1"/>
</dbReference>
<dbReference type="InterPro" id="IPR014729">
    <property type="entry name" value="Rossmann-like_a/b/a_fold"/>
</dbReference>
<dbReference type="InterPro" id="IPR011063">
    <property type="entry name" value="TilS/TtcA_N"/>
</dbReference>
<dbReference type="InterPro" id="IPR012089">
    <property type="entry name" value="tRNA_Cyd_32_2_STrfase"/>
</dbReference>
<dbReference type="InterPro" id="IPR035107">
    <property type="entry name" value="tRNA_thiolation_TtcA_Ctu1"/>
</dbReference>
<dbReference type="NCBIfam" id="NF007972">
    <property type="entry name" value="PRK10696.1"/>
    <property type="match status" value="1"/>
</dbReference>
<dbReference type="PANTHER" id="PTHR43686:SF1">
    <property type="entry name" value="AMINOTRAN_5 DOMAIN-CONTAINING PROTEIN"/>
    <property type="match status" value="1"/>
</dbReference>
<dbReference type="PANTHER" id="PTHR43686">
    <property type="entry name" value="SULFURTRANSFERASE-RELATED"/>
    <property type="match status" value="1"/>
</dbReference>
<dbReference type="Pfam" id="PF01171">
    <property type="entry name" value="ATP_bind_3"/>
    <property type="match status" value="1"/>
</dbReference>
<dbReference type="PIRSF" id="PIRSF004976">
    <property type="entry name" value="ATPase_YdaO"/>
    <property type="match status" value="1"/>
</dbReference>
<dbReference type="SUPFAM" id="SSF52402">
    <property type="entry name" value="Adenine nucleotide alpha hydrolases-like"/>
    <property type="match status" value="1"/>
</dbReference>
<accession>C0Q3V6</accession>
<protein>
    <recommendedName>
        <fullName evidence="1">tRNA-cytidine(32) 2-sulfurtransferase</fullName>
        <ecNumber evidence="1">2.8.1.-</ecNumber>
    </recommendedName>
    <alternativeName>
        <fullName evidence="1">Two-thiocytidine biosynthesis protein A</fullName>
    </alternativeName>
    <alternativeName>
        <fullName evidence="1">tRNA 2-thiocytidine biosynthesis protein TtcA</fullName>
    </alternativeName>
</protein>
<proteinExistence type="inferred from homology"/>
<comment type="function">
    <text evidence="1">Catalyzes the ATP-dependent 2-thiolation of cytidine in position 32 of tRNA, to form 2-thiocytidine (s(2)C32). The sulfur atoms are provided by the cysteine/cysteine desulfurase (IscS) system.</text>
</comment>
<comment type="catalytic activity">
    <reaction evidence="1">
        <text>cytidine(32) in tRNA + S-sulfanyl-L-cysteinyl-[cysteine desulfurase] + AH2 + ATP = 2-thiocytidine(32) in tRNA + L-cysteinyl-[cysteine desulfurase] + A + AMP + diphosphate + H(+)</text>
        <dbReference type="Rhea" id="RHEA:57048"/>
        <dbReference type="Rhea" id="RHEA-COMP:10288"/>
        <dbReference type="Rhea" id="RHEA-COMP:12157"/>
        <dbReference type="Rhea" id="RHEA-COMP:12158"/>
        <dbReference type="Rhea" id="RHEA-COMP:14821"/>
        <dbReference type="ChEBI" id="CHEBI:13193"/>
        <dbReference type="ChEBI" id="CHEBI:15378"/>
        <dbReference type="ChEBI" id="CHEBI:17499"/>
        <dbReference type="ChEBI" id="CHEBI:29950"/>
        <dbReference type="ChEBI" id="CHEBI:30616"/>
        <dbReference type="ChEBI" id="CHEBI:33019"/>
        <dbReference type="ChEBI" id="CHEBI:61963"/>
        <dbReference type="ChEBI" id="CHEBI:82748"/>
        <dbReference type="ChEBI" id="CHEBI:141453"/>
        <dbReference type="ChEBI" id="CHEBI:456215"/>
    </reaction>
    <physiologicalReaction direction="left-to-right" evidence="1">
        <dbReference type="Rhea" id="RHEA:57049"/>
    </physiologicalReaction>
</comment>
<comment type="cofactor">
    <cofactor evidence="1">
        <name>Mg(2+)</name>
        <dbReference type="ChEBI" id="CHEBI:18420"/>
    </cofactor>
</comment>
<comment type="cofactor">
    <cofactor evidence="1">
        <name>[4Fe-4S] cluster</name>
        <dbReference type="ChEBI" id="CHEBI:49883"/>
    </cofactor>
    <text evidence="1">Binds 1 [4Fe-4S] cluster per subunit. The cluster is chelated by three Cys residues, the fourth Fe has a free coordination site that may bind a sulfur atom transferred from the persulfide of IscS.</text>
</comment>
<comment type="pathway">
    <text evidence="1">tRNA modification.</text>
</comment>
<comment type="subunit">
    <text evidence="1">Homodimer.</text>
</comment>
<comment type="subcellular location">
    <subcellularLocation>
        <location evidence="1">Cytoplasm</location>
    </subcellularLocation>
</comment>
<comment type="miscellaneous">
    <text evidence="1">The thiolation reaction likely consists of two steps: a first activation step by ATP to form an adenylated intermediate of the target base of tRNA, and a second nucleophilic substitution step of the sulfur (S) atom supplied by the hydrosulfide attached to the Fe-S cluster.</text>
</comment>
<comment type="similarity">
    <text evidence="1">Belongs to the TtcA family.</text>
</comment>
<gene>
    <name evidence="1" type="primary">ttcA</name>
    <name type="ordered locus">SPC_2080</name>
</gene>